<proteinExistence type="inferred from homology"/>
<name>MUTL_LACDA</name>
<protein>
    <recommendedName>
        <fullName evidence="1">DNA mismatch repair protein MutL</fullName>
    </recommendedName>
</protein>
<dbReference type="EMBL" id="CR954253">
    <property type="protein sequence ID" value="CAI98404.1"/>
    <property type="molecule type" value="Genomic_DNA"/>
</dbReference>
<dbReference type="RefSeq" id="WP_011544116.1">
    <property type="nucleotide sequence ID" value="NC_008054.1"/>
</dbReference>
<dbReference type="SMR" id="Q1G939"/>
<dbReference type="STRING" id="390333.Ldb1615"/>
<dbReference type="KEGG" id="ldb:Ldb1615"/>
<dbReference type="PATRIC" id="fig|390333.13.peg.1009"/>
<dbReference type="eggNOG" id="COG0323">
    <property type="taxonomic scope" value="Bacteria"/>
</dbReference>
<dbReference type="HOGENOM" id="CLU_004131_4_2_9"/>
<dbReference type="BioCyc" id="LDEL390333:LDB_RS06980-MONOMER"/>
<dbReference type="Proteomes" id="UP000001259">
    <property type="component" value="Chromosome"/>
</dbReference>
<dbReference type="GO" id="GO:0032300">
    <property type="term" value="C:mismatch repair complex"/>
    <property type="evidence" value="ECO:0007669"/>
    <property type="project" value="InterPro"/>
</dbReference>
<dbReference type="GO" id="GO:0005524">
    <property type="term" value="F:ATP binding"/>
    <property type="evidence" value="ECO:0007669"/>
    <property type="project" value="InterPro"/>
</dbReference>
<dbReference type="GO" id="GO:0016887">
    <property type="term" value="F:ATP hydrolysis activity"/>
    <property type="evidence" value="ECO:0007669"/>
    <property type="project" value="InterPro"/>
</dbReference>
<dbReference type="GO" id="GO:0140664">
    <property type="term" value="F:ATP-dependent DNA damage sensor activity"/>
    <property type="evidence" value="ECO:0007669"/>
    <property type="project" value="InterPro"/>
</dbReference>
<dbReference type="GO" id="GO:0030983">
    <property type="term" value="F:mismatched DNA binding"/>
    <property type="evidence" value="ECO:0007669"/>
    <property type="project" value="InterPro"/>
</dbReference>
<dbReference type="GO" id="GO:0006298">
    <property type="term" value="P:mismatch repair"/>
    <property type="evidence" value="ECO:0007669"/>
    <property type="project" value="UniProtKB-UniRule"/>
</dbReference>
<dbReference type="CDD" id="cd16926">
    <property type="entry name" value="HATPase_MutL-MLH-PMS-like"/>
    <property type="match status" value="1"/>
</dbReference>
<dbReference type="CDD" id="cd00782">
    <property type="entry name" value="MutL_Trans"/>
    <property type="match status" value="1"/>
</dbReference>
<dbReference type="FunFam" id="3.30.565.10:FF:000003">
    <property type="entry name" value="DNA mismatch repair endonuclease MutL"/>
    <property type="match status" value="1"/>
</dbReference>
<dbReference type="Gene3D" id="3.30.230.10">
    <property type="match status" value="1"/>
</dbReference>
<dbReference type="Gene3D" id="3.30.565.10">
    <property type="entry name" value="Histidine kinase-like ATPase, C-terminal domain"/>
    <property type="match status" value="1"/>
</dbReference>
<dbReference type="Gene3D" id="3.30.1540.20">
    <property type="entry name" value="MutL, C-terminal domain, dimerisation subdomain"/>
    <property type="match status" value="1"/>
</dbReference>
<dbReference type="Gene3D" id="3.30.1370.100">
    <property type="entry name" value="MutL, C-terminal domain, regulatory subdomain"/>
    <property type="match status" value="1"/>
</dbReference>
<dbReference type="HAMAP" id="MF_00149">
    <property type="entry name" value="DNA_mis_repair"/>
    <property type="match status" value="1"/>
</dbReference>
<dbReference type="InterPro" id="IPR014762">
    <property type="entry name" value="DNA_mismatch_repair_CS"/>
</dbReference>
<dbReference type="InterPro" id="IPR020667">
    <property type="entry name" value="DNA_mismatch_repair_MutL"/>
</dbReference>
<dbReference type="InterPro" id="IPR013507">
    <property type="entry name" value="DNA_mismatch_S5_2-like"/>
</dbReference>
<dbReference type="InterPro" id="IPR036890">
    <property type="entry name" value="HATPase_C_sf"/>
</dbReference>
<dbReference type="InterPro" id="IPR002099">
    <property type="entry name" value="MutL/Mlh/PMS"/>
</dbReference>
<dbReference type="InterPro" id="IPR038973">
    <property type="entry name" value="MutL/Mlh/Pms-like"/>
</dbReference>
<dbReference type="InterPro" id="IPR014790">
    <property type="entry name" value="MutL_C"/>
</dbReference>
<dbReference type="InterPro" id="IPR042120">
    <property type="entry name" value="MutL_C_dimsub"/>
</dbReference>
<dbReference type="InterPro" id="IPR042121">
    <property type="entry name" value="MutL_C_regsub"/>
</dbReference>
<dbReference type="InterPro" id="IPR037198">
    <property type="entry name" value="MutL_C_sf"/>
</dbReference>
<dbReference type="InterPro" id="IPR020568">
    <property type="entry name" value="Ribosomal_Su5_D2-typ_SF"/>
</dbReference>
<dbReference type="InterPro" id="IPR014721">
    <property type="entry name" value="Ribsml_uS5_D2-typ_fold_subgr"/>
</dbReference>
<dbReference type="NCBIfam" id="TIGR00585">
    <property type="entry name" value="mutl"/>
    <property type="match status" value="1"/>
</dbReference>
<dbReference type="PANTHER" id="PTHR10073">
    <property type="entry name" value="DNA MISMATCH REPAIR PROTEIN MLH, PMS, MUTL"/>
    <property type="match status" value="1"/>
</dbReference>
<dbReference type="PANTHER" id="PTHR10073:SF12">
    <property type="entry name" value="DNA MISMATCH REPAIR PROTEIN MLH1"/>
    <property type="match status" value="1"/>
</dbReference>
<dbReference type="Pfam" id="PF01119">
    <property type="entry name" value="DNA_mis_repair"/>
    <property type="match status" value="1"/>
</dbReference>
<dbReference type="Pfam" id="PF13589">
    <property type="entry name" value="HATPase_c_3"/>
    <property type="match status" value="1"/>
</dbReference>
<dbReference type="Pfam" id="PF08676">
    <property type="entry name" value="MutL_C"/>
    <property type="match status" value="1"/>
</dbReference>
<dbReference type="SMART" id="SM01340">
    <property type="entry name" value="DNA_mis_repair"/>
    <property type="match status" value="1"/>
</dbReference>
<dbReference type="SMART" id="SM00853">
    <property type="entry name" value="MutL_C"/>
    <property type="match status" value="1"/>
</dbReference>
<dbReference type="SUPFAM" id="SSF55874">
    <property type="entry name" value="ATPase domain of HSP90 chaperone/DNA topoisomerase II/histidine kinase"/>
    <property type="match status" value="1"/>
</dbReference>
<dbReference type="SUPFAM" id="SSF118116">
    <property type="entry name" value="DNA mismatch repair protein MutL"/>
    <property type="match status" value="1"/>
</dbReference>
<dbReference type="SUPFAM" id="SSF54211">
    <property type="entry name" value="Ribosomal protein S5 domain 2-like"/>
    <property type="match status" value="1"/>
</dbReference>
<dbReference type="PROSITE" id="PS00058">
    <property type="entry name" value="DNA_MISMATCH_REPAIR_1"/>
    <property type="match status" value="1"/>
</dbReference>
<comment type="function">
    <text evidence="1">This protein is involved in the repair of mismatches in DNA. It is required for dam-dependent methyl-directed DNA mismatch repair. May act as a 'molecular matchmaker', a protein that promotes the formation of a stable complex between two or more DNA-binding proteins in an ATP-dependent manner without itself being part of a final effector complex.</text>
</comment>
<comment type="similarity">
    <text evidence="1">Belongs to the DNA mismatch repair MutL/HexB family.</text>
</comment>
<feature type="chain" id="PRO_1000010030" description="DNA mismatch repair protein MutL">
    <location>
        <begin position="1"/>
        <end position="653"/>
    </location>
</feature>
<feature type="region of interest" description="Disordered" evidence="2">
    <location>
        <begin position="368"/>
        <end position="413"/>
    </location>
</feature>
<feature type="compositionally biased region" description="Basic and acidic residues" evidence="2">
    <location>
        <begin position="375"/>
        <end position="408"/>
    </location>
</feature>
<gene>
    <name evidence="1" type="primary">mutL</name>
    <name type="ordered locus">Ldb1615</name>
</gene>
<reference key="1">
    <citation type="journal article" date="2006" name="Proc. Natl. Acad. Sci. U.S.A.">
        <title>The complete genome sequence of Lactobacillus bulgaricus reveals extensive and ongoing reductive evolution.</title>
        <authorList>
            <person name="van de Guchte M."/>
            <person name="Penaud S."/>
            <person name="Grimaldi C."/>
            <person name="Barbe V."/>
            <person name="Bryson K."/>
            <person name="Nicolas P."/>
            <person name="Robert C."/>
            <person name="Oztas S."/>
            <person name="Mangenot S."/>
            <person name="Couloux A."/>
            <person name="Loux V."/>
            <person name="Dervyn R."/>
            <person name="Bossy R."/>
            <person name="Bolotin A."/>
            <person name="Batto J.-M."/>
            <person name="Walunas T."/>
            <person name="Gibrat J.-F."/>
            <person name="Bessieres P."/>
            <person name="Weissenbach J."/>
            <person name="Ehrlich S.D."/>
            <person name="Maguin E."/>
        </authorList>
    </citation>
    <scope>NUCLEOTIDE SEQUENCE [LARGE SCALE GENOMIC DNA]</scope>
    <source>
        <strain>ATCC 11842 / DSM 20081 / BCRC 10696 / JCM 1002 / NBRC 13953 / NCIMB 11778 / NCTC 12712 / WDCM 00102 / Lb 14</strain>
    </source>
</reference>
<accession>Q1G939</accession>
<organism>
    <name type="scientific">Lactobacillus delbrueckii subsp. bulgaricus (strain ATCC 11842 / DSM 20081 / BCRC 10696 / JCM 1002 / NBRC 13953 / NCIMB 11778 / NCTC 12712 / WDCM 00102 / Lb 14)</name>
    <dbReference type="NCBI Taxonomy" id="390333"/>
    <lineage>
        <taxon>Bacteria</taxon>
        <taxon>Bacillati</taxon>
        <taxon>Bacillota</taxon>
        <taxon>Bacilli</taxon>
        <taxon>Lactobacillales</taxon>
        <taxon>Lactobacillaceae</taxon>
        <taxon>Lactobacillus</taxon>
    </lineage>
</organism>
<evidence type="ECO:0000255" key="1">
    <source>
        <dbReference type="HAMAP-Rule" id="MF_00149"/>
    </source>
</evidence>
<evidence type="ECO:0000256" key="2">
    <source>
        <dbReference type="SAM" id="MobiDB-lite"/>
    </source>
</evidence>
<keyword id="KW-0227">DNA damage</keyword>
<keyword id="KW-0234">DNA repair</keyword>
<keyword id="KW-1185">Reference proteome</keyword>
<sequence>MAKIHELSENLTNQIAAGEVIERPASVVKELVENAIDAQASRIRVEVQHSGLKQISVQDNGSGIAPDQVDLAFMRHATSKIQDEHDLFNIATLGFRGEALASIAAVAHVEILTSTGGQTATRAAFAGGVKKFQEDAGSAKGTKITVGDIFYNTPARLKYLKSPKTELLKIVDIVNRIALGHPEISLTLASDGKVLLRTPGNGNLKQDVANIYGRKVAEKMLTVENEDPDFTLYGLVSEANLTRSSRNFISILLNGRYIKNYQLSSALLDGYGNKLGGKYPIAVLAIEADPLLVDVNVHPTKEEVRLSKEKELSRLITSAVTEALMDEDEASPLFQLTPFKDKTQLDQLEFNLKPNVVDTRRPDDFQLEVSQVAEPEGKTDITNKKETETKEKAEKKENKQEEKEEKTSAPEYVDLNQVREDDQYVLTKSWDQHVKEQTALPPFAGGEEAASPVTSKADQLLRQHLPALRLLGQMGGYLLAEHEGDLYLIDQVAARRRLEYDQILASLEKDENYQQGLLEPLVFDFSVYDYQKLKDQLPLLRQLGLEMEDFGQNTLLMHSYPTWLKGEVTVQVRELLDQLLSSRENDGKSLLKLVAAKAAESNVSRRVNLTGAEAADLLLRLQTASDPYRDASGQLAVVRLSQNDLSKLFKKGK</sequence>